<sequence>MKVNPSVKKICDKCKVIRRNGRVMVICENPRHKQRQG</sequence>
<evidence type="ECO:0000255" key="1">
    <source>
        <dbReference type="HAMAP-Rule" id="MF_00251"/>
    </source>
</evidence>
<evidence type="ECO:0000305" key="2"/>
<comment type="similarity">
    <text evidence="1">Belongs to the bacterial ribosomal protein bL36 family.</text>
</comment>
<gene>
    <name evidence="1" type="primary">rpmJ1</name>
    <name type="synonym">rpmJ</name>
    <name type="ordered locus">Lxx20105</name>
</gene>
<name>RL361_LEIXX</name>
<reference key="1">
    <citation type="journal article" date="2004" name="Mol. Plant Microbe Interact.">
        <title>The genome sequence of the Gram-positive sugarcane pathogen Leifsonia xyli subsp. xyli.</title>
        <authorList>
            <person name="Monteiro-Vitorello C.B."/>
            <person name="Camargo L.E.A."/>
            <person name="Van Sluys M.A."/>
            <person name="Kitajima J.P."/>
            <person name="Truffi D."/>
            <person name="do Amaral A.M."/>
            <person name="Harakava R."/>
            <person name="de Oliveira J.C.F."/>
            <person name="Wood D."/>
            <person name="de Oliveira M.C."/>
            <person name="Miyaki C.Y."/>
            <person name="Takita M.A."/>
            <person name="da Silva A.C.R."/>
            <person name="Furlan L.R."/>
            <person name="Carraro D.M."/>
            <person name="Camarotte G."/>
            <person name="Almeida N.F. Jr."/>
            <person name="Carrer H."/>
            <person name="Coutinho L.L."/>
            <person name="El-Dorry H.A."/>
            <person name="Ferro M.I.T."/>
            <person name="Gagliardi P.R."/>
            <person name="Giglioti E."/>
            <person name="Goldman M.H.S."/>
            <person name="Goldman G.H."/>
            <person name="Kimura E.T."/>
            <person name="Ferro E.S."/>
            <person name="Kuramae E.E."/>
            <person name="Lemos E.G.M."/>
            <person name="Lemos M.V.F."/>
            <person name="Mauro S.M.Z."/>
            <person name="Machado M.A."/>
            <person name="Marino C.L."/>
            <person name="Menck C.F."/>
            <person name="Nunes L.R."/>
            <person name="Oliveira R.C."/>
            <person name="Pereira G.G."/>
            <person name="Siqueira W."/>
            <person name="de Souza A.A."/>
            <person name="Tsai S.M."/>
            <person name="Zanca A.S."/>
            <person name="Simpson A.J.G."/>
            <person name="Brumbley S.M."/>
            <person name="Setubal J.C."/>
        </authorList>
    </citation>
    <scope>NUCLEOTIDE SEQUENCE [LARGE SCALE GENOMIC DNA]</scope>
    <source>
        <strain>CTCB07</strain>
    </source>
</reference>
<organism>
    <name type="scientific">Leifsonia xyli subsp. xyli (strain CTCB07)</name>
    <dbReference type="NCBI Taxonomy" id="281090"/>
    <lineage>
        <taxon>Bacteria</taxon>
        <taxon>Bacillati</taxon>
        <taxon>Actinomycetota</taxon>
        <taxon>Actinomycetes</taxon>
        <taxon>Micrococcales</taxon>
        <taxon>Microbacteriaceae</taxon>
        <taxon>Leifsonia</taxon>
    </lineage>
</organism>
<dbReference type="EMBL" id="AE016822">
    <property type="protein sequence ID" value="AAT89726.1"/>
    <property type="molecule type" value="Genomic_DNA"/>
</dbReference>
<dbReference type="RefSeq" id="WP_011186712.1">
    <property type="nucleotide sequence ID" value="NC_006087.1"/>
</dbReference>
<dbReference type="SMR" id="Q6AD18"/>
<dbReference type="STRING" id="281090.Lxx20105"/>
<dbReference type="KEGG" id="lxx:Lxx20105"/>
<dbReference type="eggNOG" id="COG0257">
    <property type="taxonomic scope" value="Bacteria"/>
</dbReference>
<dbReference type="HOGENOM" id="CLU_135723_6_2_11"/>
<dbReference type="Proteomes" id="UP000001306">
    <property type="component" value="Chromosome"/>
</dbReference>
<dbReference type="GO" id="GO:0005737">
    <property type="term" value="C:cytoplasm"/>
    <property type="evidence" value="ECO:0007669"/>
    <property type="project" value="UniProtKB-ARBA"/>
</dbReference>
<dbReference type="GO" id="GO:1990904">
    <property type="term" value="C:ribonucleoprotein complex"/>
    <property type="evidence" value="ECO:0007669"/>
    <property type="project" value="UniProtKB-KW"/>
</dbReference>
<dbReference type="GO" id="GO:0005840">
    <property type="term" value="C:ribosome"/>
    <property type="evidence" value="ECO:0007669"/>
    <property type="project" value="UniProtKB-KW"/>
</dbReference>
<dbReference type="GO" id="GO:0003735">
    <property type="term" value="F:structural constituent of ribosome"/>
    <property type="evidence" value="ECO:0007669"/>
    <property type="project" value="InterPro"/>
</dbReference>
<dbReference type="GO" id="GO:0006412">
    <property type="term" value="P:translation"/>
    <property type="evidence" value="ECO:0007669"/>
    <property type="project" value="UniProtKB-UniRule"/>
</dbReference>
<dbReference type="HAMAP" id="MF_00251">
    <property type="entry name" value="Ribosomal_bL36"/>
    <property type="match status" value="1"/>
</dbReference>
<dbReference type="InterPro" id="IPR000473">
    <property type="entry name" value="Ribosomal_bL36"/>
</dbReference>
<dbReference type="InterPro" id="IPR035977">
    <property type="entry name" value="Ribosomal_bL36_sp"/>
</dbReference>
<dbReference type="NCBIfam" id="TIGR01022">
    <property type="entry name" value="rpmJ_bact"/>
    <property type="match status" value="1"/>
</dbReference>
<dbReference type="PANTHER" id="PTHR42888">
    <property type="entry name" value="50S RIBOSOMAL PROTEIN L36, CHLOROPLASTIC"/>
    <property type="match status" value="1"/>
</dbReference>
<dbReference type="PANTHER" id="PTHR42888:SF1">
    <property type="entry name" value="LARGE RIBOSOMAL SUBUNIT PROTEIN BL36C"/>
    <property type="match status" value="1"/>
</dbReference>
<dbReference type="Pfam" id="PF00444">
    <property type="entry name" value="Ribosomal_L36"/>
    <property type="match status" value="1"/>
</dbReference>
<dbReference type="SUPFAM" id="SSF57840">
    <property type="entry name" value="Ribosomal protein L36"/>
    <property type="match status" value="1"/>
</dbReference>
<dbReference type="PROSITE" id="PS00828">
    <property type="entry name" value="RIBOSOMAL_L36"/>
    <property type="match status" value="1"/>
</dbReference>
<feature type="chain" id="PRO_0000126202" description="Large ribosomal subunit protein bL36A">
    <location>
        <begin position="1"/>
        <end position="37"/>
    </location>
</feature>
<protein>
    <recommendedName>
        <fullName evidence="1">Large ribosomal subunit protein bL36A</fullName>
    </recommendedName>
    <alternativeName>
        <fullName evidence="2">50S ribosomal protein L36 1</fullName>
    </alternativeName>
</protein>
<keyword id="KW-1185">Reference proteome</keyword>
<keyword id="KW-0687">Ribonucleoprotein</keyword>
<keyword id="KW-0689">Ribosomal protein</keyword>
<proteinExistence type="inferred from homology"/>
<accession>Q6AD18</accession>